<reference key="1">
    <citation type="journal article" date="2006" name="PLoS Genet.">
        <title>Genome sequence of Rickettsia bellii illuminates the role of amoebae in gene exchanges between intracellular pathogens.</title>
        <authorList>
            <person name="Ogata H."/>
            <person name="La Scola B."/>
            <person name="Audic S."/>
            <person name="Renesto P."/>
            <person name="Blanc G."/>
            <person name="Robert C."/>
            <person name="Fournier P.-E."/>
            <person name="Claverie J.-M."/>
            <person name="Raoult D."/>
        </authorList>
    </citation>
    <scope>NUCLEOTIDE SEQUENCE [LARGE SCALE GENOMIC DNA]</scope>
    <source>
        <strain>RML369-C</strain>
    </source>
</reference>
<accession>Q1RI12</accession>
<feature type="chain" id="PRO_0000280919" description="Putative ankyrin repeat protein RBE_0921">
    <location>
        <begin position="1"/>
        <end position="694"/>
    </location>
</feature>
<feature type="repeat" description="ANK 1">
    <location>
        <begin position="122"/>
        <end position="151"/>
    </location>
</feature>
<feature type="repeat" description="ANK 2">
    <location>
        <begin position="155"/>
        <end position="185"/>
    </location>
</feature>
<feature type="repeat" description="ANK 3">
    <location>
        <begin position="216"/>
        <end position="245"/>
    </location>
</feature>
<feature type="repeat" description="ANK 4">
    <location>
        <begin position="249"/>
        <end position="275"/>
    </location>
</feature>
<feature type="repeat" description="ANK 5">
    <location>
        <begin position="279"/>
        <end position="317"/>
    </location>
</feature>
<feature type="repeat" description="ANK 6">
    <location>
        <begin position="321"/>
        <end position="350"/>
    </location>
</feature>
<feature type="repeat" description="ANK 7">
    <location>
        <begin position="351"/>
        <end position="382"/>
    </location>
</feature>
<feature type="repeat" description="ANK 8">
    <location>
        <begin position="384"/>
        <end position="413"/>
    </location>
</feature>
<feature type="repeat" description="ANK 9">
    <location>
        <begin position="423"/>
        <end position="452"/>
    </location>
</feature>
<feature type="repeat" description="ANK 10">
    <location>
        <begin position="456"/>
        <end position="485"/>
    </location>
</feature>
<dbReference type="EMBL" id="CP000087">
    <property type="protein sequence ID" value="ABE05002.1"/>
    <property type="molecule type" value="Genomic_DNA"/>
</dbReference>
<dbReference type="RefSeq" id="WP_011477583.1">
    <property type="nucleotide sequence ID" value="NC_007940.1"/>
</dbReference>
<dbReference type="SMR" id="Q1RI12"/>
<dbReference type="KEGG" id="rbe:RBE_0921"/>
<dbReference type="eggNOG" id="COG0666">
    <property type="taxonomic scope" value="Bacteria"/>
</dbReference>
<dbReference type="HOGENOM" id="CLU_396839_0_0_5"/>
<dbReference type="OrthoDB" id="7164484at2"/>
<dbReference type="Proteomes" id="UP000001951">
    <property type="component" value="Chromosome"/>
</dbReference>
<dbReference type="Gene3D" id="1.25.40.20">
    <property type="entry name" value="Ankyrin repeat-containing domain"/>
    <property type="match status" value="4"/>
</dbReference>
<dbReference type="InterPro" id="IPR002110">
    <property type="entry name" value="Ankyrin_rpt"/>
</dbReference>
<dbReference type="InterPro" id="IPR036770">
    <property type="entry name" value="Ankyrin_rpt-contain_sf"/>
</dbReference>
<dbReference type="PANTHER" id="PTHR24198">
    <property type="entry name" value="ANKYRIN REPEAT AND PROTEIN KINASE DOMAIN-CONTAINING PROTEIN"/>
    <property type="match status" value="1"/>
</dbReference>
<dbReference type="PANTHER" id="PTHR24198:SF165">
    <property type="entry name" value="ANKYRIN REPEAT-CONTAINING PROTEIN-RELATED"/>
    <property type="match status" value="1"/>
</dbReference>
<dbReference type="Pfam" id="PF00023">
    <property type="entry name" value="Ank"/>
    <property type="match status" value="1"/>
</dbReference>
<dbReference type="Pfam" id="PF12796">
    <property type="entry name" value="Ank_2"/>
    <property type="match status" value="3"/>
</dbReference>
<dbReference type="PRINTS" id="PR01415">
    <property type="entry name" value="ANKYRIN"/>
</dbReference>
<dbReference type="SMART" id="SM00248">
    <property type="entry name" value="ANK"/>
    <property type="match status" value="10"/>
</dbReference>
<dbReference type="SUPFAM" id="SSF48403">
    <property type="entry name" value="Ankyrin repeat"/>
    <property type="match status" value="2"/>
</dbReference>
<dbReference type="PROSITE" id="PS50297">
    <property type="entry name" value="ANK_REP_REGION"/>
    <property type="match status" value="1"/>
</dbReference>
<dbReference type="PROSITE" id="PS50088">
    <property type="entry name" value="ANK_REPEAT"/>
    <property type="match status" value="5"/>
</dbReference>
<organism>
    <name type="scientific">Rickettsia bellii (strain RML369-C)</name>
    <dbReference type="NCBI Taxonomy" id="336407"/>
    <lineage>
        <taxon>Bacteria</taxon>
        <taxon>Pseudomonadati</taxon>
        <taxon>Pseudomonadota</taxon>
        <taxon>Alphaproteobacteria</taxon>
        <taxon>Rickettsiales</taxon>
        <taxon>Rickettsiaceae</taxon>
        <taxon>Rickettsieae</taxon>
        <taxon>Rickettsia</taxon>
        <taxon>belli group</taxon>
    </lineage>
</organism>
<proteinExistence type="predicted"/>
<name>Y921_RICBR</name>
<sequence>MHKDTKLLDEIKNIKSKLKSGKPAVAPKPTPKQIKAWEETHKSHLNLDTKNSSISVPPPMPDHVLLQTSKTLSVSTLPNIKFNTINQAKFLKAIEDYDLDKIKELISSNTIKIDSFGKRGKLGKTPLQYAIINDKPELAKLLIDAGANINVKTQNGRNLFELAMYNSASDQTFELLLKTNININSMDLRALSRLHNKLFSILLKPANDINTTIGKFNRTLLHQAAERNNIKKAQISINHNINVEAQDITGETALHMLKTSKMAKILLKAGSNTEAQNKLGRTPLHNAILQANKRQVNIKNIHNIVLKLIKSGANPNAVDYYGFTPLEYAIRINDSKIFKLLIKNNAKFKKNRYELFCQALESGNLTATKYLFKKEFLNNINDKNGQNYLYYIATGGNKEVLEYLVKKNHDNGKKILTQFVDKQRNTPIHIAAQNGQFEIIKNFQKLGFDINARNADGETVLHILARAQNGEMIKELIKLGADINIKNKIGKTALDKVEEDFKGISKKISNKQLQELFEESNIIARTGRIEDETKYLYQYRQDGYYKNIEREGNRGRSATLLVPEVNISLFFTGIGLLYNANDSTIRHFMPHDFWTDNARRTEDFFNMRLDNKKFVQTHSKEKFLKTYKNFLKDNPQKDYNEIIANLYPKGLIGIALQNDDLEHKLYALEAKYYVSEKYNMDLPMTIVKNKKLIP</sequence>
<keyword id="KW-0040">ANK repeat</keyword>
<keyword id="KW-0677">Repeat</keyword>
<gene>
    <name type="ordered locus">RBE_0921</name>
</gene>
<protein>
    <recommendedName>
        <fullName>Putative ankyrin repeat protein RBE_0921</fullName>
    </recommendedName>
</protein>